<keyword id="KW-1003">Cell membrane</keyword>
<keyword id="KW-0407">Ion channel</keyword>
<keyword id="KW-0406">Ion transport</keyword>
<keyword id="KW-0472">Membrane</keyword>
<keyword id="KW-0630">Potassium</keyword>
<keyword id="KW-0631">Potassium channel</keyword>
<keyword id="KW-0633">Potassium transport</keyword>
<keyword id="KW-1185">Reference proteome</keyword>
<keyword id="KW-0812">Transmembrane</keyword>
<keyword id="KW-1133">Transmembrane helix</keyword>
<keyword id="KW-0813">Transport</keyword>
<keyword id="KW-0851">Voltage-gated channel</keyword>
<feature type="chain" id="PRO_0000054088" description="Delayed-rectifier potassium channel regulatory subunit KCNS3">
    <location>
        <begin position="1"/>
        <end position="491"/>
    </location>
</feature>
<feature type="topological domain" description="Cytoplasmic" evidence="2">
    <location>
        <begin position="1"/>
        <end position="182"/>
    </location>
</feature>
<feature type="transmembrane region" description="Helical; Name=Segment S1" evidence="2">
    <location>
        <begin position="183"/>
        <end position="204"/>
    </location>
</feature>
<feature type="topological domain" description="Extracellular" evidence="2">
    <location>
        <begin position="205"/>
        <end position="220"/>
    </location>
</feature>
<feature type="transmembrane region" description="Helical; Name=Segment S2" evidence="2">
    <location>
        <begin position="221"/>
        <end position="243"/>
    </location>
</feature>
<feature type="topological domain" description="Cytoplasmic" evidence="2">
    <location>
        <begin position="244"/>
        <end position="254"/>
    </location>
</feature>
<feature type="transmembrane region" description="Helical; Name=Segment S3" evidence="2">
    <location>
        <begin position="255"/>
        <end position="275"/>
    </location>
</feature>
<feature type="topological domain" description="Extracellular" evidence="2">
    <location>
        <begin position="276"/>
        <end position="285"/>
    </location>
</feature>
<feature type="transmembrane region" description="Helical; Voltage-sensor; Name=Segment S4" evidence="2">
    <location>
        <begin position="286"/>
        <end position="306"/>
    </location>
</feature>
<feature type="topological domain" description="Cytoplasmic" evidence="2">
    <location>
        <begin position="307"/>
        <end position="321"/>
    </location>
</feature>
<feature type="transmembrane region" description="Helical; Name=Segment S5" evidence="2">
    <location>
        <begin position="322"/>
        <end position="343"/>
    </location>
</feature>
<feature type="topological domain" description="Extracellular" evidence="2">
    <location>
        <begin position="344"/>
        <end position="357"/>
    </location>
</feature>
<feature type="intramembrane region" description="Helical; Name=Pore helix" evidence="2">
    <location>
        <begin position="358"/>
        <end position="369"/>
    </location>
</feature>
<feature type="intramembrane region" evidence="2">
    <location>
        <begin position="370"/>
        <end position="377"/>
    </location>
</feature>
<feature type="topological domain" description="Extracellular" evidence="2">
    <location>
        <begin position="378"/>
        <end position="384"/>
    </location>
</feature>
<feature type="transmembrane region" description="Helical; Name=Segment S6" evidence="2">
    <location>
        <begin position="385"/>
        <end position="413"/>
    </location>
</feature>
<feature type="topological domain" description="Cytoplasmic" evidence="2">
    <location>
        <begin position="414"/>
        <end position="491"/>
    </location>
</feature>
<feature type="short sequence motif" description="Selectivity filter" evidence="2">
    <location>
        <begin position="370"/>
        <end position="375"/>
    </location>
</feature>
<evidence type="ECO:0000250" key="1">
    <source>
        <dbReference type="UniProtKB" id="O88759"/>
    </source>
</evidence>
<evidence type="ECO:0000250" key="2">
    <source>
        <dbReference type="UniProtKB" id="P63142"/>
    </source>
</evidence>
<evidence type="ECO:0000250" key="3">
    <source>
        <dbReference type="UniProtKB" id="Q9BQ31"/>
    </source>
</evidence>
<evidence type="ECO:0000305" key="4"/>
<organism>
    <name type="scientific">Oryctolagus cuniculus</name>
    <name type="common">Rabbit</name>
    <dbReference type="NCBI Taxonomy" id="9986"/>
    <lineage>
        <taxon>Eukaryota</taxon>
        <taxon>Metazoa</taxon>
        <taxon>Chordata</taxon>
        <taxon>Craniata</taxon>
        <taxon>Vertebrata</taxon>
        <taxon>Euteleostomi</taxon>
        <taxon>Mammalia</taxon>
        <taxon>Eutheria</taxon>
        <taxon>Euarchontoglires</taxon>
        <taxon>Glires</taxon>
        <taxon>Lagomorpha</taxon>
        <taxon>Leporidae</taxon>
        <taxon>Oryctolagus</taxon>
    </lineage>
</organism>
<comment type="function">
    <text evidence="1">Potassium channel regulatory subunit that modulates the delayed rectifier potassium channel activity of KCNB1 by namely slowing down the deactivation and inactivation time constants. While it does not form functional channel on its own, it can form functional heterotetrameric channels with KCNB1.</text>
</comment>
<comment type="subunit">
    <text evidence="1 3">Heterotetramer with KCNB1 (By similarity). Does not form homomultimers (By similarity).</text>
</comment>
<comment type="subcellular location">
    <subcellularLocation>
        <location evidence="3">Cell membrane</location>
        <topology evidence="3">Multi-pass membrane protein</topology>
    </subcellularLocation>
    <text evidence="3">May not reach the plasma membrane but remain in an intracellular compartment in the absence of KCNB1.</text>
</comment>
<comment type="domain">
    <text evidence="2">The transmembrane segment S4 functions as a voltage-sensor and is characterized by a series of positively charged amino acids at every third position. Channel opening and closing is effected by a conformation change that affects the position and orientation of the voltage-sensor paddle formed by S3 and S4 within the membrane. A transmembrane electric field that is positive inside would push the positively charged S4 segment outwards, thereby opening the pore, while a field that is negative inside would pull the S4 segment inwards and close the pore. Changes in the position and orientation of S4 are then transmitted to the activation gate formed by the inner helix bundle via the S4-S5 linker region.</text>
</comment>
<comment type="similarity">
    <text evidence="4">Belongs to the potassium channel family. S (TC 1.A.1.2) subfamily. Kv9.3/KCNS3 sub-subfamily.</text>
</comment>
<proteinExistence type="evidence at transcript level"/>
<protein>
    <recommendedName>
        <fullName evidence="3">Delayed-rectifier potassium channel regulatory subunit KCNS3</fullName>
    </recommendedName>
    <alternativeName>
        <fullName>Delayed-rectifier K(+) channel alpha subunit 3</fullName>
    </alternativeName>
    <alternativeName>
        <fullName>Delayed-rectifier potassium channel subunit Kv9.3</fullName>
    </alternativeName>
    <alternativeName>
        <fullName evidence="3">Potassium voltage-gated channel subfamily S member 3</fullName>
    </alternativeName>
</protein>
<sequence length="491" mass="55942">MVFGEFFHRPGPDEELVNLNVGGFKQSVDQSTLLRFPHTRLGKLLTCHSEEAILELCDDYSVADKEYYFDRNPSLFRYVLNFYYTGKLHVMEELCVFSFCQEIEYWGINELFIDSCCSNRYQERKEENHEKDWDQKSNDVSTDTSFEESSVFEKELEKFDQLRFGQLRKKIWIRMENPAYCLSAKLIAISSLSVVLASIVAMCVHSMSEFQNEDGEVDDPVLEGVEIACIAWFTGELAVRLVAAPCQKKFWKNPLNIIDFVSIIPFYATLAVDTKEEESEDIENMGKVVQILRLMRIFRILKLARHSVGLRSLGATLRHSYHEVGLLLLFLSVGISIFSVLIYSVEKDDHTSSLTSIPICWWWATISMTTVGYGDTHPVTLAGKLIASTCIICGILVVALPITIIFNKFSKYYQKQKDIDVDQCSEDPPEKCPELPYFNIRDLYAQRVHAFITSLSSVGIVVSDPDSTDASSIEDNEDVYNTASLENCTAK</sequence>
<name>KCNS3_RABIT</name>
<reference key="1">
    <citation type="submission" date="1999-12" db="EMBL/GenBank/DDBJ databases">
        <authorList>
            <person name="Rae J.L."/>
        </authorList>
    </citation>
    <scope>NUCLEOTIDE SEQUENCE [MRNA]</scope>
    <source>
        <strain>New Zealand white</strain>
        <tissue>Corneal epithelium</tissue>
    </source>
</reference>
<accession>Q9TT17</accession>
<gene>
    <name evidence="3" type="primary">KCNS3</name>
</gene>
<dbReference type="EMBL" id="AF209723">
    <property type="protein sequence ID" value="AAF22833.1"/>
    <property type="molecule type" value="mRNA"/>
</dbReference>
<dbReference type="RefSeq" id="NP_001076121.1">
    <property type="nucleotide sequence ID" value="NM_001082652.1"/>
</dbReference>
<dbReference type="SMR" id="Q9TT17"/>
<dbReference type="FunCoup" id="Q9TT17">
    <property type="interactions" value="12"/>
</dbReference>
<dbReference type="STRING" id="9986.ENSOCUP00000006367"/>
<dbReference type="PaxDb" id="9986-ENSOCUP00000006367"/>
<dbReference type="Ensembl" id="ENSOCUT00000007364.2">
    <property type="protein sequence ID" value="ENSOCUP00000006367.2"/>
    <property type="gene ID" value="ENSOCUG00000007365.2"/>
</dbReference>
<dbReference type="GeneID" id="100009354"/>
<dbReference type="KEGG" id="ocu:100009354"/>
<dbReference type="CTD" id="3790"/>
<dbReference type="eggNOG" id="KOG3713">
    <property type="taxonomic scope" value="Eukaryota"/>
</dbReference>
<dbReference type="GeneTree" id="ENSGT00940000155979"/>
<dbReference type="HOGENOM" id="CLU_011722_4_1_1"/>
<dbReference type="InParanoid" id="Q9TT17"/>
<dbReference type="OMA" id="CQELPYF"/>
<dbReference type="OrthoDB" id="296522at2759"/>
<dbReference type="TreeFam" id="TF313103"/>
<dbReference type="Proteomes" id="UP000001811">
    <property type="component" value="Chromosome 2"/>
</dbReference>
<dbReference type="Bgee" id="ENSOCUG00000007365">
    <property type="expression patterns" value="Expressed in prefrontal cortex and 14 other cell types or tissues"/>
</dbReference>
<dbReference type="GO" id="GO:0005829">
    <property type="term" value="C:cytosol"/>
    <property type="evidence" value="ECO:0007669"/>
    <property type="project" value="Ensembl"/>
</dbReference>
<dbReference type="GO" id="GO:0005794">
    <property type="term" value="C:Golgi apparatus"/>
    <property type="evidence" value="ECO:0007669"/>
    <property type="project" value="Ensembl"/>
</dbReference>
<dbReference type="GO" id="GO:0008076">
    <property type="term" value="C:voltage-gated potassium channel complex"/>
    <property type="evidence" value="ECO:0007669"/>
    <property type="project" value="InterPro"/>
</dbReference>
<dbReference type="GO" id="GO:0005249">
    <property type="term" value="F:voltage-gated potassium channel activity"/>
    <property type="evidence" value="ECO:0007669"/>
    <property type="project" value="InterPro"/>
</dbReference>
<dbReference type="GO" id="GO:0001508">
    <property type="term" value="P:action potential"/>
    <property type="evidence" value="ECO:0007669"/>
    <property type="project" value="TreeGrafter"/>
</dbReference>
<dbReference type="GO" id="GO:0051260">
    <property type="term" value="P:protein homooligomerization"/>
    <property type="evidence" value="ECO:0007669"/>
    <property type="project" value="InterPro"/>
</dbReference>
<dbReference type="CDD" id="cd18428">
    <property type="entry name" value="BTB_POZ_KCNS3"/>
    <property type="match status" value="1"/>
</dbReference>
<dbReference type="FunFam" id="1.10.287.70:FF:000005">
    <property type="entry name" value="potassium voltage-gated channel subfamily G member 1"/>
    <property type="match status" value="1"/>
</dbReference>
<dbReference type="FunFam" id="3.30.710.10:FF:000029">
    <property type="entry name" value="potassium voltage-gated channel subfamily S member 2"/>
    <property type="match status" value="1"/>
</dbReference>
<dbReference type="FunFam" id="1.20.120.350:FF:000045">
    <property type="entry name" value="Potassium voltage-gated channel subfamily S member 3"/>
    <property type="match status" value="1"/>
</dbReference>
<dbReference type="Gene3D" id="1.10.287.70">
    <property type="match status" value="1"/>
</dbReference>
<dbReference type="Gene3D" id="3.30.710.10">
    <property type="entry name" value="Potassium Channel Kv1.1, Chain A"/>
    <property type="match status" value="1"/>
</dbReference>
<dbReference type="Gene3D" id="1.20.120.350">
    <property type="entry name" value="Voltage-gated potassium channels. Chain C"/>
    <property type="match status" value="1"/>
</dbReference>
<dbReference type="InterPro" id="IPR000210">
    <property type="entry name" value="BTB/POZ_dom"/>
</dbReference>
<dbReference type="InterPro" id="IPR005821">
    <property type="entry name" value="Ion_trans_dom"/>
</dbReference>
<dbReference type="InterPro" id="IPR003968">
    <property type="entry name" value="K_chnl_volt-dep_Kv"/>
</dbReference>
<dbReference type="InterPro" id="IPR003971">
    <property type="entry name" value="K_chnl_volt-dep_Kv5/Kv9"/>
</dbReference>
<dbReference type="InterPro" id="IPR011333">
    <property type="entry name" value="SKP1/BTB/POZ_sf"/>
</dbReference>
<dbReference type="InterPro" id="IPR003131">
    <property type="entry name" value="T1-type_BTB"/>
</dbReference>
<dbReference type="InterPro" id="IPR028325">
    <property type="entry name" value="VG_K_chnl"/>
</dbReference>
<dbReference type="InterPro" id="IPR027359">
    <property type="entry name" value="Volt_channel_dom_sf"/>
</dbReference>
<dbReference type="PANTHER" id="PTHR11537:SF39">
    <property type="entry name" value="POTASSIUM VOLTAGE-GATED CHANNEL SUBFAMILY S MEMBER 3"/>
    <property type="match status" value="1"/>
</dbReference>
<dbReference type="PANTHER" id="PTHR11537">
    <property type="entry name" value="VOLTAGE-GATED POTASSIUM CHANNEL"/>
    <property type="match status" value="1"/>
</dbReference>
<dbReference type="Pfam" id="PF02214">
    <property type="entry name" value="BTB_2"/>
    <property type="match status" value="1"/>
</dbReference>
<dbReference type="Pfam" id="PF00520">
    <property type="entry name" value="Ion_trans"/>
    <property type="match status" value="1"/>
</dbReference>
<dbReference type="PRINTS" id="PR00169">
    <property type="entry name" value="KCHANNEL"/>
</dbReference>
<dbReference type="PRINTS" id="PR01494">
    <property type="entry name" value="KV9CHANNEL"/>
</dbReference>
<dbReference type="PRINTS" id="PR01491">
    <property type="entry name" value="KVCHANNEL"/>
</dbReference>
<dbReference type="SMART" id="SM00225">
    <property type="entry name" value="BTB"/>
    <property type="match status" value="1"/>
</dbReference>
<dbReference type="SUPFAM" id="SSF54695">
    <property type="entry name" value="POZ domain"/>
    <property type="match status" value="1"/>
</dbReference>
<dbReference type="SUPFAM" id="SSF81324">
    <property type="entry name" value="Voltage-gated potassium channels"/>
    <property type="match status" value="1"/>
</dbReference>